<reference key="1">
    <citation type="journal article" date="2006" name="Lancet">
        <title>Complete genome sequence of USA300, an epidemic clone of community-acquired meticillin-resistant Staphylococcus aureus.</title>
        <authorList>
            <person name="Diep B.A."/>
            <person name="Gill S.R."/>
            <person name="Chang R.F."/>
            <person name="Phan T.H."/>
            <person name="Chen J.H."/>
            <person name="Davidson M.G."/>
            <person name="Lin F."/>
            <person name="Lin J."/>
            <person name="Carleton H.A."/>
            <person name="Mongodin E.F."/>
            <person name="Sensabaugh G.F."/>
            <person name="Perdreau-Remington F."/>
        </authorList>
    </citation>
    <scope>NUCLEOTIDE SEQUENCE [LARGE SCALE GENOMIC DNA]</scope>
    <source>
        <strain>USA300</strain>
    </source>
</reference>
<dbReference type="EC" id="3.4.21.92" evidence="1"/>
<dbReference type="EMBL" id="CP000255">
    <property type="protein sequence ID" value="ABD21972.1"/>
    <property type="molecule type" value="Genomic_DNA"/>
</dbReference>
<dbReference type="RefSeq" id="WP_001049165.1">
    <property type="nucleotide sequence ID" value="NZ_CP027476.1"/>
</dbReference>
<dbReference type="SMR" id="Q2FIM5"/>
<dbReference type="MEROPS" id="S14.001"/>
<dbReference type="GeneID" id="98345115"/>
<dbReference type="KEGG" id="saa:SAUSA300_0752"/>
<dbReference type="HOGENOM" id="CLU_058707_3_2_9"/>
<dbReference type="OMA" id="IHQPYSE"/>
<dbReference type="Proteomes" id="UP000001939">
    <property type="component" value="Chromosome"/>
</dbReference>
<dbReference type="GO" id="GO:0005737">
    <property type="term" value="C:cytoplasm"/>
    <property type="evidence" value="ECO:0007669"/>
    <property type="project" value="UniProtKB-SubCell"/>
</dbReference>
<dbReference type="GO" id="GO:0009368">
    <property type="term" value="C:endopeptidase Clp complex"/>
    <property type="evidence" value="ECO:0007669"/>
    <property type="project" value="TreeGrafter"/>
</dbReference>
<dbReference type="GO" id="GO:0004176">
    <property type="term" value="F:ATP-dependent peptidase activity"/>
    <property type="evidence" value="ECO:0007669"/>
    <property type="project" value="InterPro"/>
</dbReference>
<dbReference type="GO" id="GO:0051117">
    <property type="term" value="F:ATPase binding"/>
    <property type="evidence" value="ECO:0007669"/>
    <property type="project" value="TreeGrafter"/>
</dbReference>
<dbReference type="GO" id="GO:0004252">
    <property type="term" value="F:serine-type endopeptidase activity"/>
    <property type="evidence" value="ECO:0007669"/>
    <property type="project" value="UniProtKB-UniRule"/>
</dbReference>
<dbReference type="GO" id="GO:0006515">
    <property type="term" value="P:protein quality control for misfolded or incompletely synthesized proteins"/>
    <property type="evidence" value="ECO:0007669"/>
    <property type="project" value="TreeGrafter"/>
</dbReference>
<dbReference type="CDD" id="cd07017">
    <property type="entry name" value="S14_ClpP_2"/>
    <property type="match status" value="1"/>
</dbReference>
<dbReference type="FunFam" id="3.90.226.10:FF:000001">
    <property type="entry name" value="ATP-dependent Clp protease proteolytic subunit"/>
    <property type="match status" value="1"/>
</dbReference>
<dbReference type="Gene3D" id="3.90.226.10">
    <property type="entry name" value="2-enoyl-CoA Hydratase, Chain A, domain 1"/>
    <property type="match status" value="1"/>
</dbReference>
<dbReference type="HAMAP" id="MF_00444">
    <property type="entry name" value="ClpP"/>
    <property type="match status" value="1"/>
</dbReference>
<dbReference type="InterPro" id="IPR001907">
    <property type="entry name" value="ClpP"/>
</dbReference>
<dbReference type="InterPro" id="IPR029045">
    <property type="entry name" value="ClpP/crotonase-like_dom_sf"/>
</dbReference>
<dbReference type="InterPro" id="IPR023562">
    <property type="entry name" value="ClpP/TepA"/>
</dbReference>
<dbReference type="InterPro" id="IPR033135">
    <property type="entry name" value="ClpP_His_AS"/>
</dbReference>
<dbReference type="InterPro" id="IPR018215">
    <property type="entry name" value="ClpP_Ser_AS"/>
</dbReference>
<dbReference type="NCBIfam" id="TIGR00493">
    <property type="entry name" value="clpP"/>
    <property type="match status" value="1"/>
</dbReference>
<dbReference type="NCBIfam" id="NF001368">
    <property type="entry name" value="PRK00277.1"/>
    <property type="match status" value="1"/>
</dbReference>
<dbReference type="NCBIfam" id="NF009205">
    <property type="entry name" value="PRK12553.1"/>
    <property type="match status" value="1"/>
</dbReference>
<dbReference type="PANTHER" id="PTHR10381">
    <property type="entry name" value="ATP-DEPENDENT CLP PROTEASE PROTEOLYTIC SUBUNIT"/>
    <property type="match status" value="1"/>
</dbReference>
<dbReference type="PANTHER" id="PTHR10381:SF70">
    <property type="entry name" value="ATP-DEPENDENT CLP PROTEASE PROTEOLYTIC SUBUNIT"/>
    <property type="match status" value="1"/>
</dbReference>
<dbReference type="Pfam" id="PF00574">
    <property type="entry name" value="CLP_protease"/>
    <property type="match status" value="1"/>
</dbReference>
<dbReference type="PRINTS" id="PR00127">
    <property type="entry name" value="CLPPROTEASEP"/>
</dbReference>
<dbReference type="SUPFAM" id="SSF52096">
    <property type="entry name" value="ClpP/crotonase"/>
    <property type="match status" value="1"/>
</dbReference>
<dbReference type="PROSITE" id="PS00382">
    <property type="entry name" value="CLP_PROTEASE_HIS"/>
    <property type="match status" value="1"/>
</dbReference>
<dbReference type="PROSITE" id="PS00381">
    <property type="entry name" value="CLP_PROTEASE_SER"/>
    <property type="match status" value="1"/>
</dbReference>
<sequence length="195" mass="21514">MNLIPTVIETTNRGERAYDIYSRLLKDRIIMLGSQIDDNVANSIVSQLLFLQAQDSEKDIYLYINSPGGSVTAGFAIYDTIQHIKPDVQTICIGMAASMGSFLLAAGAKGKRFALPNAEVMIHQPLGGAQGQATEIEIAANHILKTREKLNRILSERTGQSIEKIQKDTDRDNFLTAEEAKEYGLIDEVMVPETK</sequence>
<protein>
    <recommendedName>
        <fullName evidence="1">ATP-dependent Clp protease proteolytic subunit</fullName>
        <ecNumber evidence="1">3.4.21.92</ecNumber>
    </recommendedName>
    <alternativeName>
        <fullName evidence="1">Endopeptidase Clp</fullName>
    </alternativeName>
</protein>
<accession>Q2FIM5</accession>
<proteinExistence type="inferred from homology"/>
<feature type="chain" id="PRO_0000236405" description="ATP-dependent Clp protease proteolytic subunit">
    <location>
        <begin position="1"/>
        <end position="195"/>
    </location>
</feature>
<feature type="active site" description="Nucleophile" evidence="1">
    <location>
        <position position="98"/>
    </location>
</feature>
<feature type="active site" evidence="1">
    <location>
        <position position="123"/>
    </location>
</feature>
<name>CLPP_STAA3</name>
<organism>
    <name type="scientific">Staphylococcus aureus (strain USA300)</name>
    <dbReference type="NCBI Taxonomy" id="367830"/>
    <lineage>
        <taxon>Bacteria</taxon>
        <taxon>Bacillati</taxon>
        <taxon>Bacillota</taxon>
        <taxon>Bacilli</taxon>
        <taxon>Bacillales</taxon>
        <taxon>Staphylococcaceae</taxon>
        <taxon>Staphylococcus</taxon>
    </lineage>
</organism>
<evidence type="ECO:0000255" key="1">
    <source>
        <dbReference type="HAMAP-Rule" id="MF_00444"/>
    </source>
</evidence>
<keyword id="KW-0963">Cytoplasm</keyword>
<keyword id="KW-0378">Hydrolase</keyword>
<keyword id="KW-0645">Protease</keyword>
<keyword id="KW-0720">Serine protease</keyword>
<comment type="function">
    <text evidence="1">Cleaves peptides in various proteins in a process that requires ATP hydrolysis. Has a chymotrypsin-like activity. Plays a major role in the degradation of misfolded proteins.</text>
</comment>
<comment type="catalytic activity">
    <reaction evidence="1">
        <text>Hydrolysis of proteins to small peptides in the presence of ATP and magnesium. alpha-casein is the usual test substrate. In the absence of ATP, only oligopeptides shorter than five residues are hydrolyzed (such as succinyl-Leu-Tyr-|-NHMec, and Leu-Tyr-Leu-|-Tyr-Trp, in which cleavage of the -Tyr-|-Leu- and -Tyr-|-Trp bonds also occurs).</text>
        <dbReference type="EC" id="3.4.21.92"/>
    </reaction>
</comment>
<comment type="subunit">
    <text evidence="1">Fourteen ClpP subunits assemble into 2 heptameric rings which stack back to back to give a disk-like structure with a central cavity, resembling the structure of eukaryotic proteasomes.</text>
</comment>
<comment type="subcellular location">
    <subcellularLocation>
        <location evidence="1">Cytoplasm</location>
    </subcellularLocation>
</comment>
<comment type="similarity">
    <text evidence="1">Belongs to the peptidase S14 family.</text>
</comment>
<gene>
    <name evidence="1" type="primary">clpP</name>
    <name type="ordered locus">SAUSA300_0752</name>
</gene>